<sequence>MKIDKLNLDGKKDSIEVLDKIFSAKINKRLVDNVLYKTNANYKGRHAKTKQQNEITGSTSKIYAQKGTGGARHASRKAPIFVGGGVAHGPKGELAYKKRKLNKSEKKLSIASLITEKNKLNNLIIFSDFGNEIKKTKEMHSIIKKFEITNSLIILDKSSKEKIEKSVRNIPNVKVTDINHFSAFDIIKFKKVVFTESSIKELEKRYS</sequence>
<accession>Q4FLL9</accession>
<protein>
    <recommendedName>
        <fullName evidence="1">Large ribosomal subunit protein uL4</fullName>
    </recommendedName>
    <alternativeName>
        <fullName evidence="2">50S ribosomal protein L4</fullName>
    </alternativeName>
</protein>
<keyword id="KW-1185">Reference proteome</keyword>
<keyword id="KW-0687">Ribonucleoprotein</keyword>
<keyword id="KW-0689">Ribosomal protein</keyword>
<keyword id="KW-0694">RNA-binding</keyword>
<keyword id="KW-0699">rRNA-binding</keyword>
<evidence type="ECO:0000255" key="1">
    <source>
        <dbReference type="HAMAP-Rule" id="MF_01328"/>
    </source>
</evidence>
<evidence type="ECO:0000305" key="2"/>
<comment type="function">
    <text evidence="1">One of the primary rRNA binding proteins, this protein initially binds near the 5'-end of the 23S rRNA. It is important during the early stages of 50S assembly. It makes multiple contacts with different domains of the 23S rRNA in the assembled 50S subunit and ribosome.</text>
</comment>
<comment type="function">
    <text evidence="1">Forms part of the polypeptide exit tunnel.</text>
</comment>
<comment type="subunit">
    <text evidence="1">Part of the 50S ribosomal subunit.</text>
</comment>
<comment type="similarity">
    <text evidence="1">Belongs to the universal ribosomal protein uL4 family.</text>
</comment>
<organism>
    <name type="scientific">Pelagibacter ubique (strain HTCC1062)</name>
    <dbReference type="NCBI Taxonomy" id="335992"/>
    <lineage>
        <taxon>Bacteria</taxon>
        <taxon>Pseudomonadati</taxon>
        <taxon>Pseudomonadota</taxon>
        <taxon>Alphaproteobacteria</taxon>
        <taxon>Candidatus Pelagibacterales</taxon>
        <taxon>Candidatus Pelagibacteraceae</taxon>
        <taxon>Candidatus Pelagibacter</taxon>
    </lineage>
</organism>
<name>RL4_PELUB</name>
<proteinExistence type="inferred from homology"/>
<feature type="chain" id="PRO_0000242408" description="Large ribosomal subunit protein uL4">
    <location>
        <begin position="1"/>
        <end position="207"/>
    </location>
</feature>
<dbReference type="EMBL" id="CP000084">
    <property type="protein sequence ID" value="AAZ21919.1"/>
    <property type="molecule type" value="Genomic_DNA"/>
</dbReference>
<dbReference type="RefSeq" id="WP_011282156.1">
    <property type="nucleotide sequence ID" value="NC_007205.1"/>
</dbReference>
<dbReference type="SMR" id="Q4FLL9"/>
<dbReference type="STRING" id="335992.SAR11_1116"/>
<dbReference type="GeneID" id="66295605"/>
<dbReference type="KEGG" id="pub:SAR11_1116"/>
<dbReference type="eggNOG" id="COG0088">
    <property type="taxonomic scope" value="Bacteria"/>
</dbReference>
<dbReference type="HOGENOM" id="CLU_041575_5_0_5"/>
<dbReference type="OrthoDB" id="9803201at2"/>
<dbReference type="Proteomes" id="UP000002528">
    <property type="component" value="Chromosome"/>
</dbReference>
<dbReference type="GO" id="GO:1990904">
    <property type="term" value="C:ribonucleoprotein complex"/>
    <property type="evidence" value="ECO:0007669"/>
    <property type="project" value="UniProtKB-KW"/>
</dbReference>
<dbReference type="GO" id="GO:0005840">
    <property type="term" value="C:ribosome"/>
    <property type="evidence" value="ECO:0007669"/>
    <property type="project" value="UniProtKB-KW"/>
</dbReference>
<dbReference type="GO" id="GO:0019843">
    <property type="term" value="F:rRNA binding"/>
    <property type="evidence" value="ECO:0007669"/>
    <property type="project" value="UniProtKB-UniRule"/>
</dbReference>
<dbReference type="GO" id="GO:0003735">
    <property type="term" value="F:structural constituent of ribosome"/>
    <property type="evidence" value="ECO:0007669"/>
    <property type="project" value="InterPro"/>
</dbReference>
<dbReference type="GO" id="GO:0006412">
    <property type="term" value="P:translation"/>
    <property type="evidence" value="ECO:0007669"/>
    <property type="project" value="UniProtKB-UniRule"/>
</dbReference>
<dbReference type="Gene3D" id="3.40.1370.10">
    <property type="match status" value="1"/>
</dbReference>
<dbReference type="HAMAP" id="MF_01328_B">
    <property type="entry name" value="Ribosomal_uL4_B"/>
    <property type="match status" value="1"/>
</dbReference>
<dbReference type="InterPro" id="IPR002136">
    <property type="entry name" value="Ribosomal_uL4"/>
</dbReference>
<dbReference type="InterPro" id="IPR013005">
    <property type="entry name" value="Ribosomal_uL4-like"/>
</dbReference>
<dbReference type="InterPro" id="IPR023574">
    <property type="entry name" value="Ribosomal_uL4_dom_sf"/>
</dbReference>
<dbReference type="NCBIfam" id="TIGR03953">
    <property type="entry name" value="rplD_bact"/>
    <property type="match status" value="1"/>
</dbReference>
<dbReference type="PANTHER" id="PTHR10746">
    <property type="entry name" value="50S RIBOSOMAL PROTEIN L4"/>
    <property type="match status" value="1"/>
</dbReference>
<dbReference type="PANTHER" id="PTHR10746:SF6">
    <property type="entry name" value="LARGE RIBOSOMAL SUBUNIT PROTEIN UL4M"/>
    <property type="match status" value="1"/>
</dbReference>
<dbReference type="Pfam" id="PF00573">
    <property type="entry name" value="Ribosomal_L4"/>
    <property type="match status" value="1"/>
</dbReference>
<dbReference type="SUPFAM" id="SSF52166">
    <property type="entry name" value="Ribosomal protein L4"/>
    <property type="match status" value="1"/>
</dbReference>
<reference key="1">
    <citation type="journal article" date="2005" name="Science">
        <title>Genome streamlining in a cosmopolitan oceanic bacterium.</title>
        <authorList>
            <person name="Giovannoni S.J."/>
            <person name="Tripp H.J."/>
            <person name="Givan S."/>
            <person name="Podar M."/>
            <person name="Vergin K.L."/>
            <person name="Baptista D."/>
            <person name="Bibbs L."/>
            <person name="Eads J."/>
            <person name="Richardson T.H."/>
            <person name="Noordewier M."/>
            <person name="Rappe M.S."/>
            <person name="Short J.M."/>
            <person name="Carrington J.C."/>
            <person name="Mathur E.J."/>
        </authorList>
    </citation>
    <scope>NUCLEOTIDE SEQUENCE [LARGE SCALE GENOMIC DNA]</scope>
    <source>
        <strain>HTCC1062</strain>
    </source>
</reference>
<gene>
    <name evidence="1" type="primary">rplD</name>
    <name type="ordered locus">SAR11_1116</name>
</gene>